<gene>
    <name evidence="1" type="primary">gcvT</name>
    <name type="ordered locus">CKO_04269</name>
</gene>
<evidence type="ECO:0000255" key="1">
    <source>
        <dbReference type="HAMAP-Rule" id="MF_00259"/>
    </source>
</evidence>
<dbReference type="EC" id="2.1.2.10" evidence="1"/>
<dbReference type="EMBL" id="CP000822">
    <property type="protein sequence ID" value="ABV15327.1"/>
    <property type="molecule type" value="Genomic_DNA"/>
</dbReference>
<dbReference type="RefSeq" id="WP_012135011.1">
    <property type="nucleotide sequence ID" value="NC_009792.1"/>
</dbReference>
<dbReference type="SMR" id="A8APB4"/>
<dbReference type="STRING" id="290338.CKO_04269"/>
<dbReference type="GeneID" id="45137870"/>
<dbReference type="KEGG" id="cko:CKO_04269"/>
<dbReference type="HOGENOM" id="CLU_007884_10_2_6"/>
<dbReference type="OrthoDB" id="9774591at2"/>
<dbReference type="Proteomes" id="UP000008148">
    <property type="component" value="Chromosome"/>
</dbReference>
<dbReference type="GO" id="GO:0005829">
    <property type="term" value="C:cytosol"/>
    <property type="evidence" value="ECO:0007669"/>
    <property type="project" value="TreeGrafter"/>
</dbReference>
<dbReference type="GO" id="GO:0005960">
    <property type="term" value="C:glycine cleavage complex"/>
    <property type="evidence" value="ECO:0007669"/>
    <property type="project" value="InterPro"/>
</dbReference>
<dbReference type="GO" id="GO:0004047">
    <property type="term" value="F:aminomethyltransferase activity"/>
    <property type="evidence" value="ECO:0007669"/>
    <property type="project" value="UniProtKB-UniRule"/>
</dbReference>
<dbReference type="GO" id="GO:0008483">
    <property type="term" value="F:transaminase activity"/>
    <property type="evidence" value="ECO:0007669"/>
    <property type="project" value="UniProtKB-KW"/>
</dbReference>
<dbReference type="GO" id="GO:0019464">
    <property type="term" value="P:glycine decarboxylation via glycine cleavage system"/>
    <property type="evidence" value="ECO:0007669"/>
    <property type="project" value="UniProtKB-UniRule"/>
</dbReference>
<dbReference type="FunFam" id="2.40.30.110:FF:000001">
    <property type="entry name" value="Aminomethyltransferase"/>
    <property type="match status" value="1"/>
</dbReference>
<dbReference type="FunFam" id="3.30.70.1400:FF:000001">
    <property type="entry name" value="Aminomethyltransferase"/>
    <property type="match status" value="1"/>
</dbReference>
<dbReference type="FunFam" id="4.10.1250.10:FF:000001">
    <property type="entry name" value="Aminomethyltransferase"/>
    <property type="match status" value="1"/>
</dbReference>
<dbReference type="Gene3D" id="2.40.30.110">
    <property type="entry name" value="Aminomethyltransferase beta-barrel domains"/>
    <property type="match status" value="1"/>
</dbReference>
<dbReference type="Gene3D" id="3.30.70.1400">
    <property type="entry name" value="Aminomethyltransferase beta-barrel domains"/>
    <property type="match status" value="1"/>
</dbReference>
<dbReference type="Gene3D" id="4.10.1250.10">
    <property type="entry name" value="Aminomethyltransferase fragment"/>
    <property type="match status" value="1"/>
</dbReference>
<dbReference type="Gene3D" id="3.30.1360.120">
    <property type="entry name" value="Probable tRNA modification gtpase trme, domain 1"/>
    <property type="match status" value="1"/>
</dbReference>
<dbReference type="HAMAP" id="MF_00259">
    <property type="entry name" value="GcvT"/>
    <property type="match status" value="1"/>
</dbReference>
<dbReference type="InterPro" id="IPR006223">
    <property type="entry name" value="GCS_T"/>
</dbReference>
<dbReference type="InterPro" id="IPR022903">
    <property type="entry name" value="GCS_T_bac"/>
</dbReference>
<dbReference type="InterPro" id="IPR013977">
    <property type="entry name" value="GCST_C"/>
</dbReference>
<dbReference type="InterPro" id="IPR006222">
    <property type="entry name" value="GCV_T_N"/>
</dbReference>
<dbReference type="InterPro" id="IPR028896">
    <property type="entry name" value="GcvT/YgfZ/DmdA"/>
</dbReference>
<dbReference type="InterPro" id="IPR029043">
    <property type="entry name" value="GcvT/YgfZ_C"/>
</dbReference>
<dbReference type="InterPro" id="IPR027266">
    <property type="entry name" value="TrmE/GcvT_dom1"/>
</dbReference>
<dbReference type="NCBIfam" id="TIGR00528">
    <property type="entry name" value="gcvT"/>
    <property type="match status" value="1"/>
</dbReference>
<dbReference type="NCBIfam" id="NF001567">
    <property type="entry name" value="PRK00389.1"/>
    <property type="match status" value="1"/>
</dbReference>
<dbReference type="PANTHER" id="PTHR43757">
    <property type="entry name" value="AMINOMETHYLTRANSFERASE"/>
    <property type="match status" value="1"/>
</dbReference>
<dbReference type="PANTHER" id="PTHR43757:SF2">
    <property type="entry name" value="AMINOMETHYLTRANSFERASE, MITOCHONDRIAL"/>
    <property type="match status" value="1"/>
</dbReference>
<dbReference type="Pfam" id="PF01571">
    <property type="entry name" value="GCV_T"/>
    <property type="match status" value="1"/>
</dbReference>
<dbReference type="Pfam" id="PF08669">
    <property type="entry name" value="GCV_T_C"/>
    <property type="match status" value="1"/>
</dbReference>
<dbReference type="PIRSF" id="PIRSF006487">
    <property type="entry name" value="GcvT"/>
    <property type="match status" value="1"/>
</dbReference>
<dbReference type="SUPFAM" id="SSF101790">
    <property type="entry name" value="Aminomethyltransferase beta-barrel domain"/>
    <property type="match status" value="1"/>
</dbReference>
<dbReference type="SUPFAM" id="SSF103025">
    <property type="entry name" value="Folate-binding domain"/>
    <property type="match status" value="1"/>
</dbReference>
<sequence>MAQQTPLYEQHTLCGARMVDFHGWMMPLHYGSQLDEHHAVRTDAGMFDVSHMTIVDLRGSRTREFLRYLLANDVAKLTKTGKALYSGMLNASGGVIDDLIVYYFTEDFFRLVVNSATREKDLSWITQHAEPYAIDITVRDDLSLIAVQGPNAQAKAATLFTEEQRKAVEGMKPFFGVQAGDLFIATTGYTGEAGYEIAMPNEKAADFWRALVESGVKPCGLGARDTLRLEAGMNLYGQEMDEGVSPLAANMGWTIAWEPADRDFIGREALEVQREKGTEQLVGLVMTEKGVLRNELPVRFTDAQGNQLEGVITSGTFSPTLGYSIALARVPAGIGETAIVQIRNREMPVKVTKPVFVRNGKAVA</sequence>
<accession>A8APB4</accession>
<organism>
    <name type="scientific">Citrobacter koseri (strain ATCC BAA-895 / CDC 4225-83 / SGSC4696)</name>
    <dbReference type="NCBI Taxonomy" id="290338"/>
    <lineage>
        <taxon>Bacteria</taxon>
        <taxon>Pseudomonadati</taxon>
        <taxon>Pseudomonadota</taxon>
        <taxon>Gammaproteobacteria</taxon>
        <taxon>Enterobacterales</taxon>
        <taxon>Enterobacteriaceae</taxon>
        <taxon>Citrobacter</taxon>
    </lineage>
</organism>
<protein>
    <recommendedName>
        <fullName evidence="1">Aminomethyltransferase</fullName>
        <ecNumber evidence="1">2.1.2.10</ecNumber>
    </recommendedName>
    <alternativeName>
        <fullName evidence="1">Glycine cleavage system T protein</fullName>
    </alternativeName>
</protein>
<comment type="function">
    <text evidence="1">The glycine cleavage system catalyzes the degradation of glycine.</text>
</comment>
<comment type="catalytic activity">
    <reaction evidence="1">
        <text>N(6)-[(R)-S(8)-aminomethyldihydrolipoyl]-L-lysyl-[protein] + (6S)-5,6,7,8-tetrahydrofolate = N(6)-[(R)-dihydrolipoyl]-L-lysyl-[protein] + (6R)-5,10-methylene-5,6,7,8-tetrahydrofolate + NH4(+)</text>
        <dbReference type="Rhea" id="RHEA:16945"/>
        <dbReference type="Rhea" id="RHEA-COMP:10475"/>
        <dbReference type="Rhea" id="RHEA-COMP:10492"/>
        <dbReference type="ChEBI" id="CHEBI:15636"/>
        <dbReference type="ChEBI" id="CHEBI:28938"/>
        <dbReference type="ChEBI" id="CHEBI:57453"/>
        <dbReference type="ChEBI" id="CHEBI:83100"/>
        <dbReference type="ChEBI" id="CHEBI:83143"/>
        <dbReference type="EC" id="2.1.2.10"/>
    </reaction>
</comment>
<comment type="subunit">
    <text evidence="1">The glycine cleavage system is composed of four proteins: P, T, L and H.</text>
</comment>
<comment type="similarity">
    <text evidence="1">Belongs to the GcvT family.</text>
</comment>
<feature type="chain" id="PRO_1000047656" description="Aminomethyltransferase">
    <location>
        <begin position="1"/>
        <end position="364"/>
    </location>
</feature>
<keyword id="KW-0032">Aminotransferase</keyword>
<keyword id="KW-1185">Reference proteome</keyword>
<keyword id="KW-0808">Transferase</keyword>
<name>GCST_CITK8</name>
<proteinExistence type="inferred from homology"/>
<reference key="1">
    <citation type="submission" date="2007-08" db="EMBL/GenBank/DDBJ databases">
        <authorList>
            <consortium name="The Citrobacter koseri Genome Sequencing Project"/>
            <person name="McClelland M."/>
            <person name="Sanderson E.K."/>
            <person name="Porwollik S."/>
            <person name="Spieth J."/>
            <person name="Clifton W.S."/>
            <person name="Latreille P."/>
            <person name="Courtney L."/>
            <person name="Wang C."/>
            <person name="Pepin K."/>
            <person name="Bhonagiri V."/>
            <person name="Nash W."/>
            <person name="Johnson M."/>
            <person name="Thiruvilangam P."/>
            <person name="Wilson R."/>
        </authorList>
    </citation>
    <scope>NUCLEOTIDE SEQUENCE [LARGE SCALE GENOMIC DNA]</scope>
    <source>
        <strain>ATCC BAA-895 / CDC 4225-83 / SGSC4696</strain>
    </source>
</reference>